<organism>
    <name type="scientific">Influenza A virus (strain A/Memphis/4/1980 H3N2)</name>
    <dbReference type="NCBI Taxonomy" id="383578"/>
    <lineage>
        <taxon>Viruses</taxon>
        <taxon>Riboviria</taxon>
        <taxon>Orthornavirae</taxon>
        <taxon>Negarnaviricota</taxon>
        <taxon>Polyploviricotina</taxon>
        <taxon>Insthoviricetes</taxon>
        <taxon>Articulavirales</taxon>
        <taxon>Orthomyxoviridae</taxon>
        <taxon>Alphainfluenzavirus</taxon>
        <taxon>Alphainfluenzavirus influenzae</taxon>
        <taxon>Influenza A virus</taxon>
    </lineage>
</organism>
<organismHost>
    <name type="scientific">Aves</name>
    <dbReference type="NCBI Taxonomy" id="8782"/>
</organismHost>
<organismHost>
    <name type="scientific">Cetacea</name>
    <name type="common">whales</name>
    <dbReference type="NCBI Taxonomy" id="9721"/>
</organismHost>
<organismHost>
    <name type="scientific">Homo sapiens</name>
    <name type="common">Human</name>
    <dbReference type="NCBI Taxonomy" id="9606"/>
</organismHost>
<organismHost>
    <name type="scientific">Phocidae</name>
    <name type="common">true seals</name>
    <dbReference type="NCBI Taxonomy" id="9709"/>
</organismHost>
<organismHost>
    <name type="scientific">Sus scrofa</name>
    <name type="common">Pig</name>
    <dbReference type="NCBI Taxonomy" id="9823"/>
</organismHost>
<dbReference type="EMBL" id="CY007620">
    <property type="protein sequence ID" value="ABC46566.1"/>
    <property type="molecule type" value="Genomic_RNA"/>
</dbReference>
<dbReference type="SMR" id="Q2PI08"/>
<dbReference type="Proteomes" id="UP000008577">
    <property type="component" value="Genome"/>
</dbReference>
<dbReference type="GO" id="GO:0042025">
    <property type="term" value="C:host cell nucleus"/>
    <property type="evidence" value="ECO:0007669"/>
    <property type="project" value="UniProtKB-SubCell"/>
</dbReference>
<dbReference type="GO" id="GO:0016020">
    <property type="term" value="C:membrane"/>
    <property type="evidence" value="ECO:0007669"/>
    <property type="project" value="UniProtKB-KW"/>
</dbReference>
<dbReference type="GO" id="GO:0055036">
    <property type="term" value="C:virion membrane"/>
    <property type="evidence" value="ECO:0007669"/>
    <property type="project" value="UniProtKB-SubCell"/>
</dbReference>
<dbReference type="GO" id="GO:0003723">
    <property type="term" value="F:RNA binding"/>
    <property type="evidence" value="ECO:0007669"/>
    <property type="project" value="UniProtKB-UniRule"/>
</dbReference>
<dbReference type="GO" id="GO:0039660">
    <property type="term" value="F:structural constituent of virion"/>
    <property type="evidence" value="ECO:0007669"/>
    <property type="project" value="UniProtKB-UniRule"/>
</dbReference>
<dbReference type="GO" id="GO:0046761">
    <property type="term" value="P:viral budding from plasma membrane"/>
    <property type="evidence" value="ECO:0007669"/>
    <property type="project" value="UniProtKB-UniRule"/>
</dbReference>
<dbReference type="FunFam" id="1.10.10.180:FF:000001">
    <property type="entry name" value="Matrix protein 1"/>
    <property type="match status" value="1"/>
</dbReference>
<dbReference type="FunFam" id="1.20.91.10:FF:000001">
    <property type="entry name" value="Matrix protein 1"/>
    <property type="match status" value="1"/>
</dbReference>
<dbReference type="Gene3D" id="1.10.10.180">
    <property type="match status" value="1"/>
</dbReference>
<dbReference type="Gene3D" id="1.20.91.10">
    <property type="match status" value="1"/>
</dbReference>
<dbReference type="HAMAP" id="MF_04068">
    <property type="entry name" value="INFV_M1"/>
    <property type="match status" value="1"/>
</dbReference>
<dbReference type="InterPro" id="IPR036039">
    <property type="entry name" value="Flu_matrix_M1"/>
</dbReference>
<dbReference type="InterPro" id="IPR013188">
    <property type="entry name" value="Flu_matrix_M1_C"/>
</dbReference>
<dbReference type="InterPro" id="IPR001561">
    <property type="entry name" value="Flu_matrix_M1_N"/>
</dbReference>
<dbReference type="InterPro" id="IPR015423">
    <property type="entry name" value="Flu_matrix_M1_N_sub1"/>
</dbReference>
<dbReference type="InterPro" id="IPR015799">
    <property type="entry name" value="Flu_matrix_M1_N_sub2"/>
</dbReference>
<dbReference type="InterPro" id="IPR037533">
    <property type="entry name" value="INFV_M1"/>
</dbReference>
<dbReference type="Pfam" id="PF00598">
    <property type="entry name" value="Flu_M1"/>
    <property type="match status" value="1"/>
</dbReference>
<dbReference type="Pfam" id="PF08289">
    <property type="entry name" value="Flu_M1_C"/>
    <property type="match status" value="1"/>
</dbReference>
<dbReference type="SMART" id="SM00759">
    <property type="entry name" value="Flu_M1_C"/>
    <property type="match status" value="1"/>
</dbReference>
<dbReference type="SUPFAM" id="SSF48145">
    <property type="entry name" value="Influenza virus matrix protein M1"/>
    <property type="match status" value="1"/>
</dbReference>
<evidence type="ECO:0000255" key="1">
    <source>
        <dbReference type="HAMAP-Rule" id="MF_04068"/>
    </source>
</evidence>
<comment type="function">
    <text evidence="1">Plays critical roles in virus replication, from virus entry and uncoating to assembly and budding of the virus particle. M1 binding to ribonucleocapsids (RNPs) in nucleus seems to inhibit viral transcription. Interaction of viral NEP with M1-RNP is thought to promote nuclear export of the complex, which is targeted to the virion assembly site at the apical plasma membrane in polarized epithelial cells. Interactions with NA and HA may bring M1, a non-raft-associated protein, into lipid rafts. Forms a continuous shell on the inner side of the lipid bilayer in virion, where it binds the RNP. During virus entry into cell, the M2 ion channel acidifies the internal virion core, inducing M1 dissociation from the RNP. M1-free RNPs are transported to the nucleus, where viral transcription and replication can take place.</text>
</comment>
<comment type="function">
    <text evidence="1">Determines the virion's shape: spherical or filamentous. Clinical isolates of influenza are characterized by the presence of significant proportion of filamentous virions, whereas after multiple passage on eggs or cell culture, virions have only spherical morphology. Filamentous virions are thought to be important to infect neighboring cells, and spherical virions more suited to spread through aerosol between hosts organisms.</text>
</comment>
<comment type="subunit">
    <text evidence="1">Homodimer and homomultimer. Interacts with NEP. Binds ribonucleocapsid by both interacting with genomic RNA and NP protein. May interact with HA and NA. Cannot bind NP without genomic RNA.</text>
</comment>
<comment type="subcellular location">
    <subcellularLocation>
        <location evidence="1">Virion membrane</location>
        <topology evidence="1">Peripheral membrane protein</topology>
        <orientation evidence="1">Cytoplasmic side</orientation>
    </subcellularLocation>
    <subcellularLocation>
        <location evidence="1">Host nucleus</location>
    </subcellularLocation>
</comment>
<comment type="alternative products">
    <event type="alternative splicing"/>
    <isoform>
        <id>Q2PI08-1</id>
        <name>M1</name>
        <sequence type="displayed"/>
    </isoform>
    <isoform>
        <id>Q2PI09-1</id>
        <name>M2</name>
        <sequence type="external"/>
    </isoform>
    <text>Only the first 9 residues are shared by the 2 isoforms.</text>
</comment>
<comment type="miscellaneous">
    <text evidence="1">Most abundant protein in virion. When expressed alone can form virus-like particles in transfected cells.</text>
</comment>
<comment type="similarity">
    <text evidence="1">Belongs to the influenza viruses Matrix protein M1 family.</text>
</comment>
<reference key="1">
    <citation type="submission" date="2005-12" db="EMBL/GenBank/DDBJ databases">
        <title>The NIAID influenza genome sequencing project.</title>
        <authorList>
            <person name="Ghedin E."/>
            <person name="Spiro D."/>
            <person name="Miller N."/>
            <person name="Zaborsky J."/>
            <person name="Feldblyum T."/>
            <person name="Subbu V."/>
            <person name="Shumway M."/>
            <person name="Sparenborg J."/>
            <person name="Groveman L."/>
            <person name="Halpin R."/>
            <person name="Sitz J."/>
            <person name="Koo H."/>
            <person name="Salzberg S.L."/>
            <person name="Webster R.G."/>
            <person name="Hoffmann E."/>
            <person name="Krauss S."/>
            <person name="Naeve C."/>
            <person name="Bao Y."/>
            <person name="Bolotov P."/>
            <person name="Dernovoy D."/>
            <person name="Kiryutin B."/>
            <person name="Lipman D.J."/>
            <person name="Tatusova T."/>
        </authorList>
    </citation>
    <scope>NUCLEOTIDE SEQUENCE [GENOMIC RNA]</scope>
</reference>
<proteinExistence type="inferred from homology"/>
<sequence length="252" mass="27834">MSLLTEVETYVLSIVPSGPLKAEIAQRLEDVFAGKNTDLEALMEWLKTRPILSPLTKGILGFVFTLTVPSERGLQRRRFVQNALNGNGDPNNMDRAVKLYRKLKREITFHGAKEIALSYSAGALASCMGLIYNRMGAVTTEVAFGLVCATCEQIADSQHRSHRQMVATTNPLIRHENRMVLASTTAKAMEQMAGSSEQAAEAMEVASQARQMVQAMRAIGTHPSSSAGLKDDLLENLQTYQKRMGVQMQRFK</sequence>
<name>M1_I80A4</name>
<protein>
    <recommendedName>
        <fullName evidence="1">Matrix protein 1</fullName>
        <shortName evidence="1">M1</shortName>
    </recommendedName>
</protein>
<gene>
    <name evidence="1" type="primary">M</name>
</gene>
<feature type="chain" id="PRO_0000326311" description="Matrix protein 1">
    <location>
        <begin position="1"/>
        <end position="252"/>
    </location>
</feature>
<feature type="region of interest" description="Membrane-binding" evidence="1">
    <location>
        <begin position="1"/>
        <end position="164"/>
    </location>
</feature>
<feature type="region of interest" description="RNP-binding" evidence="1">
    <location>
        <begin position="165"/>
        <end position="252"/>
    </location>
</feature>
<feature type="short sequence motif" description="Nuclear localization signal" evidence="1">
    <location>
        <begin position="101"/>
        <end position="105"/>
    </location>
</feature>
<accession>Q2PI08</accession>
<keyword id="KW-0025">Alternative splicing</keyword>
<keyword id="KW-1048">Host nucleus</keyword>
<keyword id="KW-0472">Membrane</keyword>
<keyword id="KW-0694">RNA-binding</keyword>
<keyword id="KW-0468">Viral matrix protein</keyword>
<keyword id="KW-0946">Virion</keyword>